<comment type="function">
    <text evidence="1">F(1)F(0) ATP synthase produces ATP from ADP in the presence of a proton or sodium gradient. F-type ATPases consist of two structural domains, F(1) containing the extramembraneous catalytic core and F(0) containing the membrane proton channel, linked together by a central stalk and a peripheral stalk. During catalysis, ATP synthesis in the catalytic domain of F(1) is coupled via a rotary mechanism of the central stalk subunits to proton translocation.</text>
</comment>
<comment type="function">
    <text evidence="1">Component of the F(0) channel, it forms part of the peripheral stalk, linking F(1) to F(0).</text>
</comment>
<comment type="subunit">
    <text evidence="1">F-type ATPases have 2 components, F(1) - the catalytic core - and F(0) - the membrane proton channel. F(1) has five subunits: alpha(3), beta(3), gamma(1), delta(1), epsilon(1). F(0) has four main subunits: a(1), b(1), b'(1) and c(10-14). The alpha and beta chains form an alternating ring which encloses part of the gamma chain. F(1) is attached to F(0) by a central stalk formed by the gamma and epsilon chains, while a peripheral stalk is formed by the delta, b and b' chains.</text>
</comment>
<comment type="subcellular location">
    <subcellularLocation>
        <location evidence="1">Plastid</location>
        <location evidence="1">Chloroplast thylakoid membrane</location>
        <topology evidence="1">Single-pass membrane protein</topology>
    </subcellularLocation>
</comment>
<comment type="miscellaneous">
    <text>In plastids the F-type ATPase is also known as CF(1)CF(0).</text>
</comment>
<comment type="similarity">
    <text evidence="1">Belongs to the ATPase B chain family.</text>
</comment>
<protein>
    <recommendedName>
        <fullName evidence="1">ATP synthase subunit b, chloroplastic</fullName>
    </recommendedName>
    <alternativeName>
        <fullName evidence="1">ATP synthase F(0) sector subunit b</fullName>
    </alternativeName>
    <alternativeName>
        <fullName evidence="1">ATPase subunit I</fullName>
    </alternativeName>
</protein>
<evidence type="ECO:0000255" key="1">
    <source>
        <dbReference type="HAMAP-Rule" id="MF_01398"/>
    </source>
</evidence>
<feature type="chain" id="PRO_0000368941" description="ATP synthase subunit b, chloroplastic">
    <location>
        <begin position="1"/>
        <end position="186"/>
    </location>
</feature>
<feature type="transmembrane region" description="Helical" evidence="1">
    <location>
        <begin position="27"/>
        <end position="49"/>
    </location>
</feature>
<dbReference type="EMBL" id="EF380354">
    <property type="protein sequence ID" value="ABQ52505.1"/>
    <property type="molecule type" value="Genomic_DNA"/>
</dbReference>
<dbReference type="RefSeq" id="YP_001294256.1">
    <property type="nucleotide sequence ID" value="NC_009600.1"/>
</dbReference>
<dbReference type="SMR" id="A6MMT0"/>
<dbReference type="GeneID" id="5236809"/>
<dbReference type="GO" id="GO:0009535">
    <property type="term" value="C:chloroplast thylakoid membrane"/>
    <property type="evidence" value="ECO:0007669"/>
    <property type="project" value="UniProtKB-SubCell"/>
</dbReference>
<dbReference type="GO" id="GO:0045259">
    <property type="term" value="C:proton-transporting ATP synthase complex"/>
    <property type="evidence" value="ECO:0007669"/>
    <property type="project" value="UniProtKB-KW"/>
</dbReference>
<dbReference type="GO" id="GO:0046933">
    <property type="term" value="F:proton-transporting ATP synthase activity, rotational mechanism"/>
    <property type="evidence" value="ECO:0007669"/>
    <property type="project" value="UniProtKB-UniRule"/>
</dbReference>
<dbReference type="CDD" id="cd06503">
    <property type="entry name" value="ATP-synt_Fo_b"/>
    <property type="match status" value="1"/>
</dbReference>
<dbReference type="HAMAP" id="MF_01398">
    <property type="entry name" value="ATP_synth_b_bprime"/>
    <property type="match status" value="1"/>
</dbReference>
<dbReference type="InterPro" id="IPR002146">
    <property type="entry name" value="ATP_synth_b/b'su_bac/chlpt"/>
</dbReference>
<dbReference type="PANTHER" id="PTHR34264">
    <property type="entry name" value="ATP SYNTHASE SUBUNIT B, CHLOROPLASTIC"/>
    <property type="match status" value="1"/>
</dbReference>
<dbReference type="PANTHER" id="PTHR34264:SF3">
    <property type="entry name" value="ATP SYNTHASE SUBUNIT B, CHLOROPLASTIC"/>
    <property type="match status" value="1"/>
</dbReference>
<dbReference type="Pfam" id="PF00430">
    <property type="entry name" value="ATP-synt_B"/>
    <property type="match status" value="1"/>
</dbReference>
<keyword id="KW-0066">ATP synthesis</keyword>
<keyword id="KW-0138">CF(0)</keyword>
<keyword id="KW-0150">Chloroplast</keyword>
<keyword id="KW-0375">Hydrogen ion transport</keyword>
<keyword id="KW-0406">Ion transport</keyword>
<keyword id="KW-0472">Membrane</keyword>
<keyword id="KW-0934">Plastid</keyword>
<keyword id="KW-0793">Thylakoid</keyword>
<keyword id="KW-0812">Transmembrane</keyword>
<keyword id="KW-1133">Transmembrane helix</keyword>
<keyword id="KW-0813">Transport</keyword>
<gene>
    <name evidence="1" type="primary">atpF</name>
</gene>
<proteinExistence type="inferred from homology"/>
<organism>
    <name type="scientific">Illicium oligandrum</name>
    <name type="common">Star anise</name>
    <dbReference type="NCBI Taxonomy" id="145286"/>
    <lineage>
        <taxon>Eukaryota</taxon>
        <taxon>Viridiplantae</taxon>
        <taxon>Streptophyta</taxon>
        <taxon>Embryophyta</taxon>
        <taxon>Tracheophyta</taxon>
        <taxon>Spermatophyta</taxon>
        <taxon>Magnoliopsida</taxon>
        <taxon>Austrobaileyales</taxon>
        <taxon>Schisandraceae</taxon>
        <taxon>Illicium</taxon>
    </lineage>
</organism>
<accession>A6MMT0</accession>
<name>ATPF_ILLOL</name>
<sequence length="186" mass="21211">MKNVNDSFVSLGHWPFAGSFGFNTDILATNPINLSVVLGVLIFFGKGVLNDLLDNRKQRILSTIRNSEELRGGAIEQLEKAWARLRKVEMEADEFRVNGYSEIEREKMNLIIATNENLERLENYKNETIHFEQQRAINQVRQRVFQQALQGALGTLKSCLNSELHLRTISDNIGTLGDMNMKEITD</sequence>
<reference key="1">
    <citation type="journal article" date="2007" name="Mol. Phylogenet. Evol.">
        <title>Phylogenetic and evolutionary implications of complete chloroplast genome sequences of four early-diverging angiosperms: Buxus (Buxaceae), Chloranthus (Chloranthaceae), Dioscorea (Dioscoreaceae), and Illicium (Schisandraceae).</title>
        <authorList>
            <person name="Hansen D.R."/>
            <person name="Dastidar S.G."/>
            <person name="Cai Z."/>
            <person name="Penaflor C."/>
            <person name="Kuehl J.V."/>
            <person name="Boore J.L."/>
            <person name="Jansen R.K."/>
        </authorList>
    </citation>
    <scope>NUCLEOTIDE SEQUENCE [LARGE SCALE GENOMIC DNA]</scope>
</reference>
<geneLocation type="chloroplast"/>